<dbReference type="EMBL" id="AB045089">
    <property type="protein sequence ID" value="BAB19661.1"/>
    <property type="molecule type" value="Genomic_DNA"/>
</dbReference>
<dbReference type="RefSeq" id="WP_156013642.1">
    <property type="nucleotide sequence ID" value="NZ_AP031374.1"/>
</dbReference>
<dbReference type="SMR" id="P57762"/>
<dbReference type="GeneID" id="95643518"/>
<dbReference type="OrthoDB" id="14749at2157"/>
<dbReference type="GO" id="GO:0003677">
    <property type="term" value="F:DNA binding"/>
    <property type="evidence" value="ECO:0007669"/>
    <property type="project" value="UniProtKB-UniRule"/>
</dbReference>
<dbReference type="GO" id="GO:0030337">
    <property type="term" value="F:DNA polymerase processivity factor activity"/>
    <property type="evidence" value="ECO:0007669"/>
    <property type="project" value="UniProtKB-UniRule"/>
</dbReference>
<dbReference type="GO" id="GO:0006272">
    <property type="term" value="P:leading strand elongation"/>
    <property type="evidence" value="ECO:0007669"/>
    <property type="project" value="TreeGrafter"/>
</dbReference>
<dbReference type="GO" id="GO:0006275">
    <property type="term" value="P:regulation of DNA replication"/>
    <property type="evidence" value="ECO:0007669"/>
    <property type="project" value="UniProtKB-UniRule"/>
</dbReference>
<dbReference type="CDD" id="cd00577">
    <property type="entry name" value="PCNA"/>
    <property type="match status" value="1"/>
</dbReference>
<dbReference type="Gene3D" id="3.70.10.10">
    <property type="match status" value="1"/>
</dbReference>
<dbReference type="HAMAP" id="MF_00317">
    <property type="entry name" value="DNApol_clamp_arch"/>
    <property type="match status" value="1"/>
</dbReference>
<dbReference type="InterPro" id="IPR046938">
    <property type="entry name" value="DNA_clamp_sf"/>
</dbReference>
<dbReference type="InterPro" id="IPR000730">
    <property type="entry name" value="Pr_cel_nuc_antig"/>
</dbReference>
<dbReference type="InterPro" id="IPR022649">
    <property type="entry name" value="Pr_cel_nuc_antig_C"/>
</dbReference>
<dbReference type="InterPro" id="IPR022659">
    <property type="entry name" value="Pr_cel_nuc_antig_CS"/>
</dbReference>
<dbReference type="InterPro" id="IPR022648">
    <property type="entry name" value="Pr_cel_nuc_antig_N"/>
</dbReference>
<dbReference type="NCBIfam" id="TIGR00590">
    <property type="entry name" value="pcna"/>
    <property type="match status" value="1"/>
</dbReference>
<dbReference type="NCBIfam" id="NF002220">
    <property type="entry name" value="PRK01115.1-3"/>
    <property type="match status" value="1"/>
</dbReference>
<dbReference type="PANTHER" id="PTHR11352">
    <property type="entry name" value="PROLIFERATING CELL NUCLEAR ANTIGEN"/>
    <property type="match status" value="1"/>
</dbReference>
<dbReference type="PANTHER" id="PTHR11352:SF0">
    <property type="entry name" value="PROLIFERATING CELL NUCLEAR ANTIGEN"/>
    <property type="match status" value="1"/>
</dbReference>
<dbReference type="Pfam" id="PF02747">
    <property type="entry name" value="PCNA_C"/>
    <property type="match status" value="1"/>
</dbReference>
<dbReference type="Pfam" id="PF00705">
    <property type="entry name" value="PCNA_N"/>
    <property type="match status" value="1"/>
</dbReference>
<dbReference type="PRINTS" id="PR00339">
    <property type="entry name" value="PCNACYCLIN"/>
</dbReference>
<dbReference type="SUPFAM" id="SSF55979">
    <property type="entry name" value="DNA clamp"/>
    <property type="match status" value="2"/>
</dbReference>
<dbReference type="PROSITE" id="PS01251">
    <property type="entry name" value="PCNA_1"/>
    <property type="match status" value="1"/>
</dbReference>
<name>PCNA1_SULOH</name>
<protein>
    <recommendedName>
        <fullName evidence="1">DNA polymerase sliding clamp 1</fullName>
    </recommendedName>
    <alternativeName>
        <fullName evidence="1">Proliferating cell nuclear antigen homolog 1</fullName>
        <shortName evidence="1">PCNA 1</shortName>
    </alternativeName>
</protein>
<reference key="1">
    <citation type="journal article" date="2000" name="Extremophiles">
        <title>Phylogenetic analysis of archaeal PCNA homologues.</title>
        <authorList>
            <person name="Iwai T."/>
            <person name="Kurosawa N."/>
            <person name="Itoh Y.H."/>
            <person name="Horiuchi T."/>
        </authorList>
    </citation>
    <scope>NUCLEOTIDE SEQUENCE [GENOMIC DNA]</scope>
    <source>
        <strain>TA-1</strain>
    </source>
</reference>
<proteinExistence type="inferred from homology"/>
<organism>
    <name type="scientific">Sulfurisphaera ohwakuensis</name>
    <dbReference type="NCBI Taxonomy" id="69656"/>
    <lineage>
        <taxon>Archaea</taxon>
        <taxon>Thermoproteota</taxon>
        <taxon>Thermoprotei</taxon>
        <taxon>Sulfolobales</taxon>
        <taxon>Sulfolobaceae</taxon>
        <taxon>Sulfurisphaera</taxon>
    </lineage>
</organism>
<gene>
    <name evidence="1" type="primary">pcn1</name>
    <name type="synonym">pcnAA</name>
</gene>
<keyword id="KW-0235">DNA replication</keyword>
<keyword id="KW-0238">DNA-binding</keyword>
<comment type="function">
    <text evidence="1">Sliding clamp subunit that acts as a moving platform for DNA processing. Responsible for tethering the catalytic subunit of DNA polymerase and other proteins to DNA during high-speed replication.</text>
</comment>
<comment type="subunit">
    <text evidence="1">Homotrimer. The subunits circularize to form a toroid; DNA passes through its center. Replication factor C (RFC) is required to load the toroid on the DNA.</text>
</comment>
<comment type="similarity">
    <text evidence="1">Belongs to the PCNA family.</text>
</comment>
<accession>P57762</accession>
<sequence>MRIVYDDVRDLKAIVQALLKLVDEALFDIKPEGIQLVAIDKAHISLIKIELPKEMFKEYDVPEEFKFGFNTQYMSKLLKAAKRKEEIIIEADSPEVVKLTLSGALNRVFNVNNIEVLPPEVPEVNLEFDIKATINASGFKNAIGEIAEVADTLLISANEEKVIVKGEGENKVEVEFSKDTGSLADIEFNKESSSAYDVEYLNDIISLTKLSDYVKVAFAEQKPMQLEFNMEGGGKVTYLLAPKLS</sequence>
<evidence type="ECO:0000255" key="1">
    <source>
        <dbReference type="HAMAP-Rule" id="MF_00317"/>
    </source>
</evidence>
<feature type="chain" id="PRO_0000149212" description="DNA polymerase sliding clamp 1">
    <location>
        <begin position="1"/>
        <end position="245"/>
    </location>
</feature>